<evidence type="ECO:0000250" key="1">
    <source>
        <dbReference type="UniProtKB" id="P69820"/>
    </source>
</evidence>
<evidence type="ECO:0000255" key="2">
    <source>
        <dbReference type="PROSITE-ProRule" id="PRU00417"/>
    </source>
</evidence>
<evidence type="ECO:0000305" key="3"/>
<dbReference type="EMBL" id="AL513382">
    <property type="protein sequence ID" value="CAD06862.1"/>
    <property type="molecule type" value="Genomic_DNA"/>
</dbReference>
<dbReference type="EMBL" id="AE014613">
    <property type="protein sequence ID" value="AAO71883.1"/>
    <property type="molecule type" value="Genomic_DNA"/>
</dbReference>
<dbReference type="RefSeq" id="NP_458819.1">
    <property type="nucleotide sequence ID" value="NC_003198.1"/>
</dbReference>
<dbReference type="RefSeq" id="WP_000776536.1">
    <property type="nucleotide sequence ID" value="NZ_WSUR01000012.1"/>
</dbReference>
<dbReference type="SMR" id="Q8Z170"/>
<dbReference type="STRING" id="220341.gene:17588562"/>
<dbReference type="KEGG" id="stt:t4436"/>
<dbReference type="KEGG" id="sty:STY4741"/>
<dbReference type="PATRIC" id="fig|220341.7.peg.4842"/>
<dbReference type="eggNOG" id="COG1762">
    <property type="taxonomic scope" value="Bacteria"/>
</dbReference>
<dbReference type="HOGENOM" id="CLU_072531_2_0_6"/>
<dbReference type="OMA" id="MGPYIIL"/>
<dbReference type="OrthoDB" id="1634238at2"/>
<dbReference type="Proteomes" id="UP000000541">
    <property type="component" value="Chromosome"/>
</dbReference>
<dbReference type="Proteomes" id="UP000002670">
    <property type="component" value="Chromosome"/>
</dbReference>
<dbReference type="GO" id="GO:0005737">
    <property type="term" value="C:cytoplasm"/>
    <property type="evidence" value="ECO:0007669"/>
    <property type="project" value="UniProtKB-SubCell"/>
</dbReference>
<dbReference type="GO" id="GO:0016301">
    <property type="term" value="F:kinase activity"/>
    <property type="evidence" value="ECO:0007669"/>
    <property type="project" value="UniProtKB-KW"/>
</dbReference>
<dbReference type="GO" id="GO:0009401">
    <property type="term" value="P:phosphoenolpyruvate-dependent sugar phosphotransferase system"/>
    <property type="evidence" value="ECO:0007669"/>
    <property type="project" value="UniProtKB-KW"/>
</dbReference>
<dbReference type="CDD" id="cd00211">
    <property type="entry name" value="PTS_IIA_fru"/>
    <property type="match status" value="1"/>
</dbReference>
<dbReference type="FunFam" id="3.40.930.10:FF:000005">
    <property type="entry name" value="Ascorbate-specific phosphotransferase enzyme IIA component"/>
    <property type="match status" value="1"/>
</dbReference>
<dbReference type="Gene3D" id="3.40.930.10">
    <property type="entry name" value="Mannitol-specific EII, Chain A"/>
    <property type="match status" value="1"/>
</dbReference>
<dbReference type="InterPro" id="IPR051351">
    <property type="entry name" value="Ascorbate-PTS_EIIA_comp"/>
</dbReference>
<dbReference type="InterPro" id="IPR016152">
    <property type="entry name" value="PTrfase/Anion_transptr"/>
</dbReference>
<dbReference type="InterPro" id="IPR002178">
    <property type="entry name" value="PTS_EIIA_type-2_dom"/>
</dbReference>
<dbReference type="NCBIfam" id="NF007694">
    <property type="entry name" value="PRK10372.1"/>
    <property type="match status" value="1"/>
</dbReference>
<dbReference type="PANTHER" id="PTHR36203">
    <property type="entry name" value="ASCORBATE-SPECIFIC PTS SYSTEM EIIA COMPONENT"/>
    <property type="match status" value="1"/>
</dbReference>
<dbReference type="PANTHER" id="PTHR36203:SF1">
    <property type="entry name" value="ASCORBATE-SPECIFIC PTS SYSTEM EIIA COMPONENT"/>
    <property type="match status" value="1"/>
</dbReference>
<dbReference type="Pfam" id="PF00359">
    <property type="entry name" value="PTS_EIIA_2"/>
    <property type="match status" value="1"/>
</dbReference>
<dbReference type="SUPFAM" id="SSF55804">
    <property type="entry name" value="Phoshotransferase/anion transport protein"/>
    <property type="match status" value="1"/>
</dbReference>
<dbReference type="PROSITE" id="PS51094">
    <property type="entry name" value="PTS_EIIA_TYPE_2"/>
    <property type="match status" value="1"/>
</dbReference>
<organism>
    <name type="scientific">Salmonella typhi</name>
    <dbReference type="NCBI Taxonomy" id="90370"/>
    <lineage>
        <taxon>Bacteria</taxon>
        <taxon>Pseudomonadati</taxon>
        <taxon>Pseudomonadota</taxon>
        <taxon>Gammaproteobacteria</taxon>
        <taxon>Enterobacterales</taxon>
        <taxon>Enterobacteriaceae</taxon>
        <taxon>Salmonella</taxon>
    </lineage>
</organism>
<sequence>MKLRDSLAENNSIRLQAEANTWQEAVKIGVDLLVAADVVEPRYYQAILDGVEQFGPYFVIAPGLVMPHGRPEEGVKKTGFSLVTLKKPLEFNHEDNDPVDILITMAAVDANTHQEVGIMQIVNLFEDEANFDRLRACRTAQEVLDLIDRTNAAA</sequence>
<keyword id="KW-0963">Cytoplasm</keyword>
<keyword id="KW-0418">Kinase</keyword>
<keyword id="KW-0597">Phosphoprotein</keyword>
<keyword id="KW-0598">Phosphotransferase system</keyword>
<keyword id="KW-0808">Transferase</keyword>
<keyword id="KW-0813">Transport</keyword>
<name>ULAC_SALTI</name>
<gene>
    <name type="primary">ulaC</name>
    <name type="ordered locus">STY4741</name>
    <name type="ordered locus">t4436</name>
</gene>
<comment type="function">
    <text evidence="1">The phosphoenolpyruvate-dependent sugar phosphotransferase system (sugar PTS), a major carbohydrate active transport system, catalyzes the phosphorylation of incoming sugar substrates concomitantly with their translocation across the cell membrane. The enzyme II UlaABC PTS system is involved in ascorbate transport.</text>
</comment>
<comment type="subcellular location">
    <subcellularLocation>
        <location evidence="3">Cytoplasm</location>
    </subcellularLocation>
</comment>
<comment type="induction">
    <text evidence="1">Induced by L-ascorbate. Repressed by UlaR.</text>
</comment>
<comment type="domain">
    <text evidence="2">The PTS EIIA type-2 domain is phosphorylated by phospho-HPr on a histidyl residue. Then, it transfers the phosphoryl group to the PTS EIIB type-2 domain.</text>
</comment>
<protein>
    <recommendedName>
        <fullName evidence="1">Ascorbate-specific PTS system EIIA component</fullName>
    </recommendedName>
    <alternativeName>
        <fullName evidence="1">Ascorbate-specific phosphotransferase enzyme IIA component</fullName>
    </alternativeName>
</protein>
<accession>Q8Z170</accession>
<accession>Q7C545</accession>
<feature type="chain" id="PRO_0000230316" description="Ascorbate-specific PTS system EIIA component">
    <location>
        <begin position="1"/>
        <end position="154"/>
    </location>
</feature>
<feature type="domain" description="PTS EIIA type-2" evidence="2">
    <location>
        <begin position="6"/>
        <end position="150"/>
    </location>
</feature>
<feature type="active site" description="Tele-phosphohistidine intermediate" evidence="2">
    <location>
        <position position="68"/>
    </location>
</feature>
<feature type="modified residue" description="Phosphohistidine" evidence="1">
    <location>
        <position position="68"/>
    </location>
</feature>
<proteinExistence type="inferred from homology"/>
<reference key="1">
    <citation type="journal article" date="2001" name="Nature">
        <title>Complete genome sequence of a multiple drug resistant Salmonella enterica serovar Typhi CT18.</title>
        <authorList>
            <person name="Parkhill J."/>
            <person name="Dougan G."/>
            <person name="James K.D."/>
            <person name="Thomson N.R."/>
            <person name="Pickard D."/>
            <person name="Wain J."/>
            <person name="Churcher C.M."/>
            <person name="Mungall K.L."/>
            <person name="Bentley S.D."/>
            <person name="Holden M.T.G."/>
            <person name="Sebaihia M."/>
            <person name="Baker S."/>
            <person name="Basham D."/>
            <person name="Brooks K."/>
            <person name="Chillingworth T."/>
            <person name="Connerton P."/>
            <person name="Cronin A."/>
            <person name="Davis P."/>
            <person name="Davies R.M."/>
            <person name="Dowd L."/>
            <person name="White N."/>
            <person name="Farrar J."/>
            <person name="Feltwell T."/>
            <person name="Hamlin N."/>
            <person name="Haque A."/>
            <person name="Hien T.T."/>
            <person name="Holroyd S."/>
            <person name="Jagels K."/>
            <person name="Krogh A."/>
            <person name="Larsen T.S."/>
            <person name="Leather S."/>
            <person name="Moule S."/>
            <person name="O'Gaora P."/>
            <person name="Parry C."/>
            <person name="Quail M.A."/>
            <person name="Rutherford K.M."/>
            <person name="Simmonds M."/>
            <person name="Skelton J."/>
            <person name="Stevens K."/>
            <person name="Whitehead S."/>
            <person name="Barrell B.G."/>
        </authorList>
    </citation>
    <scope>NUCLEOTIDE SEQUENCE [LARGE SCALE GENOMIC DNA]</scope>
    <source>
        <strain>CT18</strain>
    </source>
</reference>
<reference key="2">
    <citation type="journal article" date="2003" name="J. Bacteriol.">
        <title>Comparative genomics of Salmonella enterica serovar Typhi strains Ty2 and CT18.</title>
        <authorList>
            <person name="Deng W."/>
            <person name="Liou S.-R."/>
            <person name="Plunkett G. III"/>
            <person name="Mayhew G.F."/>
            <person name="Rose D.J."/>
            <person name="Burland V."/>
            <person name="Kodoyianni V."/>
            <person name="Schwartz D.C."/>
            <person name="Blattner F.R."/>
        </authorList>
    </citation>
    <scope>NUCLEOTIDE SEQUENCE [LARGE SCALE GENOMIC DNA]</scope>
    <source>
        <strain>ATCC 700931 / Ty2</strain>
    </source>
</reference>